<proteinExistence type="evidence at protein level"/>
<accession>P49716</accession>
<accession>Q14937</accession>
<accession>Q2M2X9</accession>
<dbReference type="EMBL" id="M83667">
    <property type="protein sequence ID" value="AAA59927.1"/>
    <property type="molecule type" value="mRNA"/>
</dbReference>
<dbReference type="EMBL" id="S63168">
    <property type="protein sequence ID" value="AAB27293.1"/>
    <property type="molecule type" value="Genomic_DNA"/>
</dbReference>
<dbReference type="EMBL" id="CH471068">
    <property type="protein sequence ID" value="EAW86679.1"/>
    <property type="molecule type" value="Genomic_DNA"/>
</dbReference>
<dbReference type="EMBL" id="BC105109">
    <property type="protein sequence ID" value="AAI05110.1"/>
    <property type="molecule type" value="mRNA"/>
</dbReference>
<dbReference type="CCDS" id="CCDS6142.1"/>
<dbReference type="PIR" id="A47008">
    <property type="entry name" value="A47008"/>
</dbReference>
<dbReference type="RefSeq" id="NP_005186.2">
    <property type="nucleotide sequence ID" value="NM_005195.3"/>
</dbReference>
<dbReference type="SMR" id="P49716"/>
<dbReference type="BioGRID" id="107481">
    <property type="interactions" value="55"/>
</dbReference>
<dbReference type="ComplexPortal" id="CPX-617">
    <property type="entry name" value="bZIP transcription factor complex, CEBPD-CEBPD"/>
</dbReference>
<dbReference type="ComplexPortal" id="CPX-6528">
    <property type="entry name" value="bZIP transcription factor complex, ATF4-CEBPD"/>
</dbReference>
<dbReference type="ComplexPortal" id="CPX-7009">
    <property type="entry name" value="bZIP transcription factor complex, BATF-CEBPD"/>
</dbReference>
<dbReference type="ComplexPortal" id="CPX-7098">
    <property type="entry name" value="bZIP transcription factor complex, BATF3-CEBPD"/>
</dbReference>
<dbReference type="DIP" id="DIP-146N"/>
<dbReference type="ELM" id="P49716"/>
<dbReference type="FunCoup" id="P49716">
    <property type="interactions" value="1376"/>
</dbReference>
<dbReference type="IntAct" id="P49716">
    <property type="interactions" value="26"/>
</dbReference>
<dbReference type="MINT" id="P49716"/>
<dbReference type="STRING" id="9606.ENSP00000386165"/>
<dbReference type="GlyGen" id="P49716">
    <property type="glycosylation" value="1 site"/>
</dbReference>
<dbReference type="iPTMnet" id="P49716"/>
<dbReference type="PhosphoSitePlus" id="P49716"/>
<dbReference type="BioMuta" id="CEBPD"/>
<dbReference type="DMDM" id="160332350"/>
<dbReference type="jPOST" id="P49716"/>
<dbReference type="MassIVE" id="P49716"/>
<dbReference type="PaxDb" id="9606-ENSP00000386165"/>
<dbReference type="PeptideAtlas" id="P49716"/>
<dbReference type="ProteomicsDB" id="56055"/>
<dbReference type="Pumba" id="P49716"/>
<dbReference type="Antibodypedia" id="24255">
    <property type="antibodies" value="254 antibodies from 29 providers"/>
</dbReference>
<dbReference type="DNASU" id="1052"/>
<dbReference type="Ensembl" id="ENST00000408965.4">
    <property type="protein sequence ID" value="ENSP00000386165.3"/>
    <property type="gene ID" value="ENSG00000221869.5"/>
</dbReference>
<dbReference type="GeneID" id="1052"/>
<dbReference type="KEGG" id="hsa:1052"/>
<dbReference type="MANE-Select" id="ENST00000408965.4">
    <property type="protein sequence ID" value="ENSP00000386165.3"/>
    <property type="RefSeq nucleotide sequence ID" value="NM_005195.4"/>
    <property type="RefSeq protein sequence ID" value="NP_005186.2"/>
</dbReference>
<dbReference type="UCSC" id="uc003xqh.2">
    <property type="organism name" value="human"/>
</dbReference>
<dbReference type="AGR" id="HGNC:1835"/>
<dbReference type="CTD" id="1052"/>
<dbReference type="DisGeNET" id="1052"/>
<dbReference type="GeneCards" id="CEBPD"/>
<dbReference type="HGNC" id="HGNC:1835">
    <property type="gene designation" value="CEBPD"/>
</dbReference>
<dbReference type="HPA" id="ENSG00000221869">
    <property type="expression patterns" value="Low tissue specificity"/>
</dbReference>
<dbReference type="MalaCards" id="CEBPD"/>
<dbReference type="MIM" id="116898">
    <property type="type" value="gene"/>
</dbReference>
<dbReference type="neXtProt" id="NX_P49716"/>
<dbReference type="OpenTargets" id="ENSG00000221869"/>
<dbReference type="PharmGKB" id="PA26378"/>
<dbReference type="VEuPathDB" id="HostDB:ENSG00000221869"/>
<dbReference type="eggNOG" id="KOG3119">
    <property type="taxonomic scope" value="Eukaryota"/>
</dbReference>
<dbReference type="GeneTree" id="ENSGT00940000163032"/>
<dbReference type="HOGENOM" id="CLU_043327_2_1_1"/>
<dbReference type="InParanoid" id="P49716"/>
<dbReference type="OMA" id="RRNMEMQ"/>
<dbReference type="OrthoDB" id="10032067at2759"/>
<dbReference type="PAN-GO" id="P49716">
    <property type="GO annotations" value="4 GO annotations based on evolutionary models"/>
</dbReference>
<dbReference type="PhylomeDB" id="P49716"/>
<dbReference type="TreeFam" id="TF105008"/>
<dbReference type="PathwayCommons" id="P49716"/>
<dbReference type="Reactome" id="R-HSA-381340">
    <property type="pathway name" value="Transcriptional regulation of white adipocyte differentiation"/>
</dbReference>
<dbReference type="Reactome" id="R-HSA-6785807">
    <property type="pathway name" value="Interleukin-4 and Interleukin-13 signaling"/>
</dbReference>
<dbReference type="Reactome" id="R-HSA-9610379">
    <property type="pathway name" value="HCMV Late Events"/>
</dbReference>
<dbReference type="SignaLink" id="P49716"/>
<dbReference type="SIGNOR" id="P49716"/>
<dbReference type="BioGRID-ORCS" id="1052">
    <property type="hits" value="23 hits in 1182 CRISPR screens"/>
</dbReference>
<dbReference type="ChiTaRS" id="CEBPD">
    <property type="organism name" value="human"/>
</dbReference>
<dbReference type="GeneWiki" id="CEBPD"/>
<dbReference type="GenomeRNAi" id="1052"/>
<dbReference type="Pharos" id="P49716">
    <property type="development level" value="Tbio"/>
</dbReference>
<dbReference type="PRO" id="PR:P49716"/>
<dbReference type="Proteomes" id="UP000005640">
    <property type="component" value="Chromosome 8"/>
</dbReference>
<dbReference type="RNAct" id="P49716">
    <property type="molecule type" value="protein"/>
</dbReference>
<dbReference type="Bgee" id="ENSG00000221869">
    <property type="expression patterns" value="Expressed in pericardium and 209 other cell types or tissues"/>
</dbReference>
<dbReference type="GO" id="GO:0000785">
    <property type="term" value="C:chromatin"/>
    <property type="evidence" value="ECO:0000247"/>
    <property type="project" value="NTNU_SB"/>
</dbReference>
<dbReference type="GO" id="GO:0005654">
    <property type="term" value="C:nucleoplasm"/>
    <property type="evidence" value="ECO:0000304"/>
    <property type="project" value="Reactome"/>
</dbReference>
<dbReference type="GO" id="GO:0005634">
    <property type="term" value="C:nucleus"/>
    <property type="evidence" value="ECO:0000303"/>
    <property type="project" value="ComplexPortal"/>
</dbReference>
<dbReference type="GO" id="GO:0090575">
    <property type="term" value="C:RNA polymerase II transcription regulator complex"/>
    <property type="evidence" value="ECO:0000353"/>
    <property type="project" value="ComplexPortal"/>
</dbReference>
<dbReference type="GO" id="GO:0001228">
    <property type="term" value="F:DNA-binding transcription activator activity, RNA polymerase II-specific"/>
    <property type="evidence" value="ECO:0007669"/>
    <property type="project" value="Ensembl"/>
</dbReference>
<dbReference type="GO" id="GO:0000981">
    <property type="term" value="F:DNA-binding transcription factor activity, RNA polymerase II-specific"/>
    <property type="evidence" value="ECO:0000247"/>
    <property type="project" value="NTNU_SB"/>
</dbReference>
<dbReference type="GO" id="GO:0042802">
    <property type="term" value="F:identical protein binding"/>
    <property type="evidence" value="ECO:0007669"/>
    <property type="project" value="Ensembl"/>
</dbReference>
<dbReference type="GO" id="GO:0000978">
    <property type="term" value="F:RNA polymerase II cis-regulatory region sequence-specific DNA binding"/>
    <property type="evidence" value="ECO:0000318"/>
    <property type="project" value="GO_Central"/>
</dbReference>
<dbReference type="GO" id="GO:1990837">
    <property type="term" value="F:sequence-specific double-stranded DNA binding"/>
    <property type="evidence" value="ECO:0000314"/>
    <property type="project" value="ARUK-UCL"/>
</dbReference>
<dbReference type="GO" id="GO:0045444">
    <property type="term" value="P:fat cell differentiation"/>
    <property type="evidence" value="ECO:0007669"/>
    <property type="project" value="Ensembl"/>
</dbReference>
<dbReference type="GO" id="GO:0002244">
    <property type="term" value="P:hematopoietic progenitor cell differentiation"/>
    <property type="evidence" value="ECO:0007669"/>
    <property type="project" value="Ensembl"/>
</dbReference>
<dbReference type="GO" id="GO:0048839">
    <property type="term" value="P:inner ear development"/>
    <property type="evidence" value="ECO:0007669"/>
    <property type="project" value="Ensembl"/>
</dbReference>
<dbReference type="GO" id="GO:0140467">
    <property type="term" value="P:integrated stress response signaling"/>
    <property type="evidence" value="ECO:0000303"/>
    <property type="project" value="ComplexPortal"/>
</dbReference>
<dbReference type="GO" id="GO:0045892">
    <property type="term" value="P:negative regulation of DNA-templated transcription"/>
    <property type="evidence" value="ECO:0007669"/>
    <property type="project" value="Ensembl"/>
</dbReference>
<dbReference type="GO" id="GO:0045669">
    <property type="term" value="P:positive regulation of osteoblast differentiation"/>
    <property type="evidence" value="ECO:0007669"/>
    <property type="project" value="Ensembl"/>
</dbReference>
<dbReference type="GO" id="GO:0045595">
    <property type="term" value="P:regulation of cell differentiation"/>
    <property type="evidence" value="ECO:0000318"/>
    <property type="project" value="GO_Central"/>
</dbReference>
<dbReference type="GO" id="GO:0006357">
    <property type="term" value="P:regulation of transcription by RNA polymerase II"/>
    <property type="evidence" value="ECO:0000318"/>
    <property type="project" value="GO_Central"/>
</dbReference>
<dbReference type="GO" id="GO:0006366">
    <property type="term" value="P:transcription by RNA polymerase II"/>
    <property type="evidence" value="ECO:0000304"/>
    <property type="project" value="ProtInc"/>
</dbReference>
<dbReference type="CDD" id="cd14714">
    <property type="entry name" value="bZIP_CEBPD"/>
    <property type="match status" value="1"/>
</dbReference>
<dbReference type="FunFam" id="1.20.5.170:FF:000028">
    <property type="entry name" value="CCAAT/enhancer-binding protein beta"/>
    <property type="match status" value="1"/>
</dbReference>
<dbReference type="Gene3D" id="1.20.5.170">
    <property type="match status" value="1"/>
</dbReference>
<dbReference type="InterPro" id="IPR004827">
    <property type="entry name" value="bZIP"/>
</dbReference>
<dbReference type="InterPro" id="IPR046347">
    <property type="entry name" value="bZIP_sf"/>
</dbReference>
<dbReference type="InterPro" id="IPR031106">
    <property type="entry name" value="C/EBP"/>
</dbReference>
<dbReference type="InterPro" id="IPR016468">
    <property type="entry name" value="C/EBP_chordates"/>
</dbReference>
<dbReference type="PANTHER" id="PTHR23334">
    <property type="entry name" value="CCAAT/ENHANCER BINDING PROTEIN"/>
    <property type="match status" value="1"/>
</dbReference>
<dbReference type="PANTHER" id="PTHR23334:SF3">
    <property type="entry name" value="CCAAT_ENHANCER-BINDING PROTEIN DELTA"/>
    <property type="match status" value="1"/>
</dbReference>
<dbReference type="Pfam" id="PF07716">
    <property type="entry name" value="bZIP_2"/>
    <property type="match status" value="1"/>
</dbReference>
<dbReference type="PIRSF" id="PIRSF005879">
    <property type="entry name" value="CCAAT/enhancer-binding"/>
    <property type="match status" value="1"/>
</dbReference>
<dbReference type="SMART" id="SM00338">
    <property type="entry name" value="BRLZ"/>
    <property type="match status" value="1"/>
</dbReference>
<dbReference type="SUPFAM" id="SSF57959">
    <property type="entry name" value="Leucine zipper domain"/>
    <property type="match status" value="1"/>
</dbReference>
<dbReference type="PROSITE" id="PS50217">
    <property type="entry name" value="BZIP"/>
    <property type="match status" value="1"/>
</dbReference>
<comment type="function">
    <text evidence="5">Transcription activator that recognizes two different DNA motifs: the CCAAT homology common to many promoters and the enhanced core homology common to many enhancers (PubMed:16397300). Important transcription factor regulating the expression of genes involved in immune and inflammatory responses (PubMed:16397300, PubMed:1741402). Transcriptional activator that enhances IL6 transcription alone and as heterodimer with CEBPB (PubMed:1741402).</text>
</comment>
<comment type="subunit">
    <text evidence="1 5">Binds DNA as a homodimer and as a heterodimer (PubMed:1741402). Can form stable heterodimers with CEBPB (PubMed:1741402). Can form stable heterodimers with CEBPA and CEBPE. Directly interacts with SPI1/PU.1; this interaction does not affect DNA-binding properties of each partner. Interacts with PRDM16.</text>
</comment>
<comment type="interaction">
    <interactant intactId="EBI-7962058">
        <id>P49716</id>
    </interactant>
    <interactant intactId="EBI-492498">
        <id>P18848</id>
        <label>ATF4</label>
    </interactant>
    <organismsDiffer>false</organismsDiffer>
    <experiments>2</experiments>
</comment>
<comment type="interaction">
    <interactant intactId="EBI-7962058">
        <id>P49716</id>
    </interactant>
    <interactant intactId="EBI-1172054">
        <id>P49715</id>
        <label>CEBPA</label>
    </interactant>
    <organismsDiffer>false</organismsDiffer>
    <experiments>2</experiments>
</comment>
<comment type="interaction">
    <interactant intactId="EBI-7962058">
        <id>P49716</id>
    </interactant>
    <interactant intactId="EBI-740209">
        <id>P53567</id>
        <label>CEBPG</label>
    </interactant>
    <organismsDiffer>false</organismsDiffer>
    <experiments>2</experiments>
</comment>
<comment type="interaction">
    <interactant intactId="EBI-7962058">
        <id>P49716</id>
    </interactant>
    <interactant intactId="EBI-742651">
        <id>P35638</id>
        <label>DDIT3</label>
    </interactant>
    <organismsDiffer>false</organismsDiffer>
    <experiments>2</experiments>
</comment>
<comment type="interaction">
    <interactant intactId="EBI-7962058">
        <id>P49716</id>
    </interactant>
    <interactant intactId="EBI-359343">
        <id>Q9BXW9</id>
        <label>FANCD2</label>
    </interactant>
    <organismsDiffer>false</organismsDiffer>
    <experiments>8</experiments>
</comment>
<comment type="interaction">
    <interactant intactId="EBI-7962058">
        <id>P49716</id>
    </interactant>
    <interactant intactId="EBI-395967">
        <id>Q8TEX9</id>
        <label>IPO4</label>
    </interactant>
    <organismsDiffer>false</organismsDiffer>
    <experiments>5</experiments>
</comment>
<comment type="subcellular location">
    <subcellularLocation>
        <location evidence="8">Nucleus</location>
    </subcellularLocation>
</comment>
<comment type="similarity">
    <text evidence="7">Belongs to the bZIP family. C/EBP subfamily.</text>
</comment>
<feature type="initiator methionine" description="Removed" evidence="9">
    <location>
        <position position="1"/>
    </location>
</feature>
<feature type="chain" id="PRO_0000076621" description="CCAAT/enhancer-binding protein delta">
    <location>
        <begin position="2"/>
        <end position="269"/>
    </location>
</feature>
<feature type="domain" description="bZIP" evidence="2">
    <location>
        <begin position="191"/>
        <end position="254"/>
    </location>
</feature>
<feature type="region of interest" description="Disordered" evidence="3">
    <location>
        <begin position="1"/>
        <end position="48"/>
    </location>
</feature>
<feature type="region of interest" description="Disordered" evidence="3">
    <location>
        <begin position="97"/>
        <end position="133"/>
    </location>
</feature>
<feature type="region of interest" description="Disordered" evidence="3">
    <location>
        <begin position="151"/>
        <end position="219"/>
    </location>
</feature>
<feature type="region of interest" description="Basic motif" evidence="2">
    <location>
        <begin position="195"/>
        <end position="222"/>
    </location>
</feature>
<feature type="region of interest" description="Leucine-zipper" evidence="2">
    <location>
        <begin position="226"/>
        <end position="254"/>
    </location>
</feature>
<feature type="compositionally biased region" description="Low complexity" evidence="3">
    <location>
        <begin position="36"/>
        <end position="48"/>
    </location>
</feature>
<feature type="compositionally biased region" description="Low complexity" evidence="3">
    <location>
        <begin position="97"/>
        <end position="107"/>
    </location>
</feature>
<feature type="compositionally biased region" description="Pro residues" evidence="3">
    <location>
        <begin position="155"/>
        <end position="175"/>
    </location>
</feature>
<feature type="compositionally biased region" description="Basic and acidic residues" evidence="3">
    <location>
        <begin position="177"/>
        <end position="201"/>
    </location>
</feature>
<feature type="modified residue" description="N-acetylserine" evidence="9">
    <location>
        <position position="2"/>
    </location>
</feature>
<feature type="cross-link" description="Glycyl lysine isopeptide (Lys-Gly) (interchain with G-Cter in SUMO)" evidence="4">
    <location>
        <position position="120"/>
    </location>
</feature>
<feature type="sequence variant" id="VAR_037087" description="In dbSNP:rs34948549.">
    <original>R</original>
    <variation>W</variation>
    <location>
        <position position="248"/>
    </location>
</feature>
<feature type="mutagenesis site" description="Loss of sumoylation." evidence="4">
    <original>K</original>
    <variation>A</variation>
    <location>
        <position position="120"/>
    </location>
</feature>
<feature type="sequence conflict" description="In Ref. 1; AAA59927." evidence="7" ref="1">
    <original>S</original>
    <variation>T</variation>
    <location>
        <position position="2"/>
    </location>
</feature>
<feature type="sequence conflict" description="In Ref. 1; AAA59927." evidence="7" ref="1">
    <original>R</original>
    <variation>G</variation>
    <location>
        <position position="13"/>
    </location>
</feature>
<feature type="sequence conflict" description="In Ref. 1; AAA59927 and 2; AAB27293." evidence="7" ref="1 2">
    <original>AA</original>
    <variation>GP</variation>
    <location>
        <begin position="140"/>
        <end position="141"/>
    </location>
</feature>
<keyword id="KW-0007">Acetylation</keyword>
<keyword id="KW-0010">Activator</keyword>
<keyword id="KW-0238">DNA-binding</keyword>
<keyword id="KW-1017">Isopeptide bond</keyword>
<keyword id="KW-0539">Nucleus</keyword>
<keyword id="KW-1267">Proteomics identification</keyword>
<keyword id="KW-1185">Reference proteome</keyword>
<keyword id="KW-0804">Transcription</keyword>
<keyword id="KW-0805">Transcription regulation</keyword>
<keyword id="KW-0832">Ubl conjugation</keyword>
<sequence>MSAALFSLDGPARGAPWPAEPAPFYEPGRAGKPGRGAEPGALGEPGAAAPAMYDDESAIDFSAYIDSMAAVPTLELCHDELFADLFNSNHKAGGAGPLELLPGGPARPLGPGPAAPRLLKREPDWGDGDAPGSLLPAQVAACAQTVVSLAAAGQPTPPTSPEPPRSSPRQTPAPGPAREKSAGKRGPDRGSPEYRQRRERNNIAVRKSRDKAKRRNQEMQQKLVELSAENEKLHQRVEQLTRDLAGLRQFFKQLPSPPFLPAAGTADCR</sequence>
<organism>
    <name type="scientific">Homo sapiens</name>
    <name type="common">Human</name>
    <dbReference type="NCBI Taxonomy" id="9606"/>
    <lineage>
        <taxon>Eukaryota</taxon>
        <taxon>Metazoa</taxon>
        <taxon>Chordata</taxon>
        <taxon>Craniata</taxon>
        <taxon>Vertebrata</taxon>
        <taxon>Euteleostomi</taxon>
        <taxon>Mammalia</taxon>
        <taxon>Eutheria</taxon>
        <taxon>Euarchontoglires</taxon>
        <taxon>Primates</taxon>
        <taxon>Haplorrhini</taxon>
        <taxon>Catarrhini</taxon>
        <taxon>Hominidae</taxon>
        <taxon>Homo</taxon>
    </lineage>
</organism>
<gene>
    <name type="primary">CEBPD</name>
</gene>
<name>CEBPD_HUMAN</name>
<reference key="1">
    <citation type="journal article" date="1992" name="Proc. Natl. Acad. Sci. U.S.A.">
        <title>A member of the C/EBP family, NF-IL6 beta, forms a heterodimer and transcriptionally synergizes with NF-IL6.</title>
        <authorList>
            <person name="Kinoshita S."/>
            <person name="Akira S."/>
            <person name="Kishimoto T."/>
        </authorList>
    </citation>
    <scope>NUCLEOTIDE SEQUENCE [MRNA]</scope>
    <scope>FUNCTION</scope>
    <scope>SUBUNIT</scope>
    <scope>INTERACTION WITH CEBPB</scope>
    <source>
        <tissue>Placenta</tissue>
    </source>
</reference>
<reference key="2">
    <citation type="journal article" date="1993" name="Genomics">
        <title>The human C/EBP delta (CRP3/CELF) gene: structure and chromosomal localization.</title>
        <authorList>
            <person name="Cleutjens C.B."/>
            <person name="van Eekelen C.C."/>
            <person name="van Dekken H."/>
            <person name="Smit E.M."/>
            <person name="Hagemeijer A."/>
            <person name="Wagner M.J."/>
            <person name="Wells D.E."/>
            <person name="Trapman J."/>
        </authorList>
    </citation>
    <scope>NUCLEOTIDE SEQUENCE [GENOMIC DNA]</scope>
</reference>
<reference key="3">
    <citation type="submission" date="2005-07" db="EMBL/GenBank/DDBJ databases">
        <authorList>
            <person name="Mural R.J."/>
            <person name="Istrail S."/>
            <person name="Sutton G.G."/>
            <person name="Florea L."/>
            <person name="Halpern A.L."/>
            <person name="Mobarry C.M."/>
            <person name="Lippert R."/>
            <person name="Walenz B."/>
            <person name="Shatkay H."/>
            <person name="Dew I."/>
            <person name="Miller J.R."/>
            <person name="Flanigan M.J."/>
            <person name="Edwards N.J."/>
            <person name="Bolanos R."/>
            <person name="Fasulo D."/>
            <person name="Halldorsson B.V."/>
            <person name="Hannenhalli S."/>
            <person name="Turner R."/>
            <person name="Yooseph S."/>
            <person name="Lu F."/>
            <person name="Nusskern D.R."/>
            <person name="Shue B.C."/>
            <person name="Zheng X.H."/>
            <person name="Zhong F."/>
            <person name="Delcher A.L."/>
            <person name="Huson D.H."/>
            <person name="Kravitz S.A."/>
            <person name="Mouchard L."/>
            <person name="Reinert K."/>
            <person name="Remington K.A."/>
            <person name="Clark A.G."/>
            <person name="Waterman M.S."/>
            <person name="Eichler E.E."/>
            <person name="Adams M.D."/>
            <person name="Hunkapiller M.W."/>
            <person name="Myers E.W."/>
            <person name="Venter J.C."/>
        </authorList>
    </citation>
    <scope>NUCLEOTIDE SEQUENCE [LARGE SCALE GENOMIC DNA]</scope>
</reference>
<reference key="4">
    <citation type="journal article" date="2004" name="Genome Res.">
        <title>The status, quality, and expansion of the NIH full-length cDNA project: the Mammalian Gene Collection (MGC).</title>
        <authorList>
            <consortium name="The MGC Project Team"/>
        </authorList>
    </citation>
    <scope>NUCLEOTIDE SEQUENCE [LARGE SCALE MRNA]</scope>
    <source>
        <tissue>Cerebellum</tissue>
    </source>
</reference>
<reference key="5">
    <citation type="journal article" date="2006" name="Nucleic Acids Res.">
        <title>Functional role of NF-IL6beta and its sumoylation and acetylation modifications in promoter activation of cyclooxygenase 2 gene.</title>
        <authorList>
            <person name="Wang J.-M."/>
            <person name="Ko C.-Y."/>
            <person name="Chen L.-C."/>
            <person name="Wang W.-L."/>
            <person name="Chang W.-C."/>
        </authorList>
    </citation>
    <scope>FUNCTION</scope>
    <scope>SUBCELLULAR LOCATION</scope>
    <scope>SUMOYLATION AT LYS-120</scope>
    <scope>MUTAGENESIS OF LYS-120</scope>
</reference>
<reference key="6">
    <citation type="journal article" date="2012" name="Proc. Natl. Acad. Sci. U.S.A.">
        <title>N-terminal acetylome analyses and functional insights of the N-terminal acetyltransferase NatB.</title>
        <authorList>
            <person name="Van Damme P."/>
            <person name="Lasa M."/>
            <person name="Polevoda B."/>
            <person name="Gazquez C."/>
            <person name="Elosegui-Artola A."/>
            <person name="Kim D.S."/>
            <person name="De Juan-Pardo E."/>
            <person name="Demeyer K."/>
            <person name="Hole K."/>
            <person name="Larrea E."/>
            <person name="Timmerman E."/>
            <person name="Prieto J."/>
            <person name="Arnesen T."/>
            <person name="Sherman F."/>
            <person name="Gevaert K."/>
            <person name="Aldabe R."/>
        </authorList>
    </citation>
    <scope>ACETYLATION [LARGE SCALE ANALYSIS] AT SER-2</scope>
    <scope>CLEAVAGE OF INITIATOR METHIONINE [LARGE SCALE ANALYSIS]</scope>
    <scope>IDENTIFICATION BY MASS SPECTROMETRY [LARGE SCALE ANALYSIS]</scope>
</reference>
<evidence type="ECO:0000250" key="1">
    <source>
        <dbReference type="UniProtKB" id="Q00322"/>
    </source>
</evidence>
<evidence type="ECO:0000255" key="2">
    <source>
        <dbReference type="PROSITE-ProRule" id="PRU00978"/>
    </source>
</evidence>
<evidence type="ECO:0000256" key="3">
    <source>
        <dbReference type="SAM" id="MobiDB-lite"/>
    </source>
</evidence>
<evidence type="ECO:0000269" key="4">
    <source>
    </source>
</evidence>
<evidence type="ECO:0000269" key="5">
    <source>
    </source>
</evidence>
<evidence type="ECO:0000303" key="6">
    <source>
    </source>
</evidence>
<evidence type="ECO:0000305" key="7"/>
<evidence type="ECO:0000305" key="8">
    <source>
    </source>
</evidence>
<evidence type="ECO:0007744" key="9">
    <source>
    </source>
</evidence>
<protein>
    <recommendedName>
        <fullName>CCAAT/enhancer-binding protein delta</fullName>
        <shortName>C/EBP delta</shortName>
    </recommendedName>
    <alternativeName>
        <fullName evidence="6">Nuclear factor NF-IL6-beta</fullName>
        <shortName evidence="6">NF-IL6-beta</shortName>
    </alternativeName>
</protein>